<proteinExistence type="evidence at protein level"/>
<comment type="function">
    <text evidence="2">Catalyzes the hydrolysis of ferric enterobactin (Fe-Ent). Hydrolyzes Fe-Ent into three molecules of 2,3-dihydroxybenzoylserine (DHBS) still complexed with ferric iron. Iron reduction is necessary to obtain complete release of the metal from DHBS. It can hydrolyze salmochelin S4 (diglucosyl-C-Ent) but is not involved in iron acquisition by this siderophore.</text>
</comment>
<comment type="catalytic activity">
    <reaction evidence="2">
        <text>Fe(III)-enterobactin + 3 H2O + H(+) = Fe(III)-[N-(2,3-dihydroxybenzoyl)-L-serine] + 2 N-(2,3-dihydroxybenzoyl)-L-serine</text>
        <dbReference type="Rhea" id="RHEA:30111"/>
        <dbReference type="ChEBI" id="CHEBI:15377"/>
        <dbReference type="ChEBI" id="CHEBI:15378"/>
        <dbReference type="ChEBI" id="CHEBI:28199"/>
        <dbReference type="ChEBI" id="CHEBI:58154"/>
        <dbReference type="ChEBI" id="CHEBI:143010"/>
        <dbReference type="EC" id="3.1.1.108"/>
    </reaction>
    <physiologicalReaction direction="left-to-right" evidence="2">
        <dbReference type="Rhea" id="RHEA:30112"/>
    </physiologicalReaction>
</comment>
<comment type="catalytic activity">
    <reaction evidence="2">
        <text>Fe(III)-enterobactin + H2O = Fe(III)-[N-(2,3-dihydroxybenzoyl)-L-serine]3 + H(+)</text>
        <dbReference type="Rhea" id="RHEA:59256"/>
        <dbReference type="ChEBI" id="CHEBI:15377"/>
        <dbReference type="ChEBI" id="CHEBI:15378"/>
        <dbReference type="ChEBI" id="CHEBI:28199"/>
        <dbReference type="ChEBI" id="CHEBI:143011"/>
    </reaction>
    <physiologicalReaction direction="left-to-right" evidence="2">
        <dbReference type="Rhea" id="RHEA:59257"/>
    </physiologicalReaction>
</comment>
<comment type="catalytic activity">
    <reaction evidence="2">
        <text>Fe(III)-[N-(2,3-dihydroxybenzoyl)-L-serine]3 + H2O + H(+) = Fe(III)-[N-(2,3-dihydroxybenzoyl)-L-serine]2 + N-(2,3-dihydroxybenzoyl)-L-serine</text>
        <dbReference type="Rhea" id="RHEA:59260"/>
        <dbReference type="ChEBI" id="CHEBI:15377"/>
        <dbReference type="ChEBI" id="CHEBI:15378"/>
        <dbReference type="ChEBI" id="CHEBI:58154"/>
        <dbReference type="ChEBI" id="CHEBI:143011"/>
        <dbReference type="ChEBI" id="CHEBI:143012"/>
    </reaction>
    <physiologicalReaction direction="left-to-right" evidence="2">
        <dbReference type="Rhea" id="RHEA:59261"/>
    </physiologicalReaction>
</comment>
<comment type="catalytic activity">
    <reaction evidence="2">
        <text>Fe(III)-[N-(2,3-dihydroxybenzoyl)-L-serine]2 + H2O + H(+) = Fe(III)-[N-(2,3-dihydroxybenzoyl)-L-serine] + N-(2,3-dihydroxybenzoyl)-L-serine</text>
        <dbReference type="Rhea" id="RHEA:59264"/>
        <dbReference type="ChEBI" id="CHEBI:15377"/>
        <dbReference type="ChEBI" id="CHEBI:15378"/>
        <dbReference type="ChEBI" id="CHEBI:58154"/>
        <dbReference type="ChEBI" id="CHEBI:143010"/>
        <dbReference type="ChEBI" id="CHEBI:143012"/>
    </reaction>
    <physiologicalReaction direction="left-to-right" evidence="2">
        <dbReference type="Rhea" id="RHEA:59265"/>
    </physiologicalReaction>
</comment>
<comment type="subunit">
    <text evidence="2">Monomer.</text>
</comment>
<comment type="subcellular location">
    <subcellularLocation>
        <location evidence="2">Periplasm</location>
    </subcellularLocation>
</comment>
<comment type="induction">
    <text evidence="2">Expression is induced by the presence of enterobactin in bacterial environment.</text>
</comment>
<comment type="disruption phenotype">
    <text evidence="2">Deletion of the gene strongly inhibits Fe uptake via enterobactin.</text>
</comment>
<comment type="similarity">
    <text evidence="4">Belongs to the esterase D family.</text>
</comment>
<evidence type="ECO:0000255" key="1"/>
<evidence type="ECO:0000269" key="2">
    <source>
    </source>
</evidence>
<evidence type="ECO:0000303" key="3">
    <source>
    </source>
</evidence>
<evidence type="ECO:0000305" key="4"/>
<evidence type="ECO:0000305" key="5">
    <source>
    </source>
</evidence>
<evidence type="ECO:0000312" key="6">
    <source>
        <dbReference type="EMBL" id="AAG06077.1"/>
    </source>
</evidence>
<evidence type="ECO:0007744" key="7">
    <source>
        <dbReference type="PDB" id="6GI0"/>
    </source>
</evidence>
<evidence type="ECO:0007744" key="8">
    <source>
        <dbReference type="PDB" id="6GI1"/>
    </source>
</evidence>
<evidence type="ECO:0007744" key="9">
    <source>
        <dbReference type="PDB" id="6GI2"/>
    </source>
</evidence>
<evidence type="ECO:0007744" key="10">
    <source>
        <dbReference type="PDB" id="6GI5"/>
    </source>
</evidence>
<evidence type="ECO:0007829" key="11">
    <source>
        <dbReference type="PDB" id="6GI0"/>
    </source>
</evidence>
<evidence type="ECO:0007829" key="12">
    <source>
        <dbReference type="PDB" id="6GI2"/>
    </source>
</evidence>
<dbReference type="EC" id="3.1.1.108" evidence="2"/>
<dbReference type="EMBL" id="AE004091">
    <property type="protein sequence ID" value="AAG06077.1"/>
    <property type="molecule type" value="Genomic_DNA"/>
</dbReference>
<dbReference type="PIR" id="A83309">
    <property type="entry name" value="A83309"/>
</dbReference>
<dbReference type="RefSeq" id="NP_251379.1">
    <property type="nucleotide sequence ID" value="NC_002516.2"/>
</dbReference>
<dbReference type="RefSeq" id="WP_003090549.1">
    <property type="nucleotide sequence ID" value="NZ_QZGE01000008.1"/>
</dbReference>
<dbReference type="PDB" id="6GI0">
    <property type="method" value="X-ray"/>
    <property type="resolution" value="2.00 A"/>
    <property type="chains" value="A/B=27-304"/>
</dbReference>
<dbReference type="PDB" id="6GI1">
    <property type="method" value="X-ray"/>
    <property type="resolution" value="1.66 A"/>
    <property type="chains" value="A/B=27-304"/>
</dbReference>
<dbReference type="PDB" id="6GI2">
    <property type="method" value="X-ray"/>
    <property type="resolution" value="1.49 A"/>
    <property type="chains" value="A/B=27-304"/>
</dbReference>
<dbReference type="PDB" id="6GI5">
    <property type="method" value="X-ray"/>
    <property type="resolution" value="3.11 A"/>
    <property type="chains" value="A/B=27-304"/>
</dbReference>
<dbReference type="PDBsum" id="6GI0"/>
<dbReference type="PDBsum" id="6GI1"/>
<dbReference type="PDBsum" id="6GI2"/>
<dbReference type="PDBsum" id="6GI5"/>
<dbReference type="SMR" id="Q9I0F2"/>
<dbReference type="STRING" id="208964.PA2689"/>
<dbReference type="ESTHER" id="pseae-PA2689">
    <property type="family name" value="A85-IroE-IroD-Fes-Yiel"/>
</dbReference>
<dbReference type="PaxDb" id="208964-PA2689"/>
<dbReference type="GeneID" id="882785"/>
<dbReference type="KEGG" id="pae:PA2689"/>
<dbReference type="PATRIC" id="fig|208964.12.peg.2814"/>
<dbReference type="PseudoCAP" id="PA2689"/>
<dbReference type="HOGENOM" id="CLU_039834_3_2_6"/>
<dbReference type="InParanoid" id="Q9I0F2"/>
<dbReference type="OrthoDB" id="9784036at2"/>
<dbReference type="PhylomeDB" id="Q9I0F2"/>
<dbReference type="BioCyc" id="MetaCyc:MONOMER-20655"/>
<dbReference type="BioCyc" id="PAER208964:G1FZ6-2729-MONOMER"/>
<dbReference type="Proteomes" id="UP000002438">
    <property type="component" value="Chromosome"/>
</dbReference>
<dbReference type="GO" id="GO:0042597">
    <property type="term" value="C:periplasmic space"/>
    <property type="evidence" value="ECO:0007669"/>
    <property type="project" value="UniProtKB-SubCell"/>
</dbReference>
<dbReference type="GO" id="GO:0052689">
    <property type="term" value="F:carboxylic ester hydrolase activity"/>
    <property type="evidence" value="ECO:0007669"/>
    <property type="project" value="UniProtKB-KW"/>
</dbReference>
<dbReference type="GO" id="GO:0016788">
    <property type="term" value="F:hydrolase activity, acting on ester bonds"/>
    <property type="evidence" value="ECO:0000314"/>
    <property type="project" value="PseudoCAP"/>
</dbReference>
<dbReference type="FunFam" id="3.40.50.1820:FF:000464">
    <property type="entry name" value="Alpha/beta hydrolase"/>
    <property type="match status" value="1"/>
</dbReference>
<dbReference type="Gene3D" id="3.40.50.1820">
    <property type="entry name" value="alpha/beta hydrolase"/>
    <property type="match status" value="1"/>
</dbReference>
<dbReference type="InterPro" id="IPR029058">
    <property type="entry name" value="AB_hydrolase_fold"/>
</dbReference>
<dbReference type="InterPro" id="IPR000801">
    <property type="entry name" value="Esterase-like"/>
</dbReference>
<dbReference type="InterPro" id="IPR052558">
    <property type="entry name" value="Siderophore_Hydrolase_D"/>
</dbReference>
<dbReference type="PANTHER" id="PTHR40841">
    <property type="entry name" value="SIDEROPHORE TRIACETYLFUSARININE C ESTERASE"/>
    <property type="match status" value="1"/>
</dbReference>
<dbReference type="PANTHER" id="PTHR40841:SF2">
    <property type="entry name" value="SIDEROPHORE-DEGRADING ESTERASE (EUROFUNG)"/>
    <property type="match status" value="1"/>
</dbReference>
<dbReference type="Pfam" id="PF00756">
    <property type="entry name" value="Esterase"/>
    <property type="match status" value="1"/>
</dbReference>
<dbReference type="SUPFAM" id="SSF53474">
    <property type="entry name" value="alpha/beta-Hydrolases"/>
    <property type="match status" value="1"/>
</dbReference>
<sequence length="304" mass="32665">MRTSLLVAALGLALAAALPGGAPLAQPDPEATMDRSLLQRQDLPYRFSAVDLDSVDGQRHYRLWLGRPLQAPPAAGYPVVWMLDGNAAVGALDESTLRRLADGDAPLLVAIGYRTPLRIDRAGRTFDYTPASPGQADQRDPLNGLPSGGADAFLDLLRDGMRPAVAAQAPLDTARQTLWGHSYGGLLVLHALFTRPGEFARYAAASPSLWWRDGAILGERAGLEQRLRGKRAELLLWRGSAEPASPRGSLKAEPGQAMARLVDDLRRVAGLTLDFQPLDGLGHGETLGASLRLLLARPAVERQR</sequence>
<feature type="signal peptide" evidence="1">
    <location>
        <begin position="1"/>
        <end position="25"/>
    </location>
</feature>
<feature type="chain" id="PRO_5004331244" description="Iron(III) enterobactin esterase">
    <location>
        <begin position="26"/>
        <end position="304"/>
    </location>
</feature>
<feature type="active site" description="Charge relay system" evidence="5">
    <location>
        <position position="182"/>
    </location>
</feature>
<feature type="active site" description="Charge relay system" evidence="5">
    <location>
        <position position="242"/>
    </location>
</feature>
<feature type="active site" description="Charge relay system" evidence="5">
    <location>
        <position position="283"/>
    </location>
</feature>
<feature type="mutagenesis site" description="Loss of activity." evidence="2">
    <original>S</original>
    <variation>A</variation>
    <location>
        <position position="182"/>
    </location>
</feature>
<feature type="mutagenesis site" description="Loss of activity." evidence="2">
    <original>H</original>
    <variation>A</variation>
    <location>
        <position position="283"/>
    </location>
</feature>
<feature type="turn" evidence="12">
    <location>
        <begin position="37"/>
        <end position="39"/>
    </location>
</feature>
<feature type="strand" evidence="12">
    <location>
        <begin position="42"/>
        <end position="53"/>
    </location>
</feature>
<feature type="strand" evidence="12">
    <location>
        <begin position="60"/>
        <end position="70"/>
    </location>
</feature>
<feature type="strand" evidence="12">
    <location>
        <begin position="77"/>
        <end position="84"/>
    </location>
</feature>
<feature type="helix" evidence="12">
    <location>
        <begin position="85"/>
        <end position="90"/>
    </location>
</feature>
<feature type="helix" evidence="12">
    <location>
        <begin position="94"/>
        <end position="100"/>
    </location>
</feature>
<feature type="strand" evidence="12">
    <location>
        <begin position="102"/>
        <end position="104"/>
    </location>
</feature>
<feature type="strand" evidence="12">
    <location>
        <begin position="107"/>
        <end position="113"/>
    </location>
</feature>
<feature type="strand" evidence="11">
    <location>
        <begin position="116"/>
        <end position="118"/>
    </location>
</feature>
<feature type="helix" evidence="12">
    <location>
        <begin position="121"/>
        <end position="128"/>
    </location>
</feature>
<feature type="turn" evidence="12">
    <location>
        <begin position="141"/>
        <end position="143"/>
    </location>
</feature>
<feature type="helix" evidence="12">
    <location>
        <begin position="150"/>
        <end position="159"/>
    </location>
</feature>
<feature type="helix" evidence="12">
    <location>
        <begin position="161"/>
        <end position="168"/>
    </location>
</feature>
<feature type="strand" evidence="12">
    <location>
        <begin position="171"/>
        <end position="181"/>
    </location>
</feature>
<feature type="helix" evidence="12">
    <location>
        <begin position="183"/>
        <end position="194"/>
    </location>
</feature>
<feature type="strand" evidence="12">
    <location>
        <begin position="200"/>
        <end position="206"/>
    </location>
</feature>
<feature type="turn" evidence="12">
    <location>
        <begin position="209"/>
        <end position="214"/>
    </location>
</feature>
<feature type="helix" evidence="12">
    <location>
        <begin position="215"/>
        <end position="219"/>
    </location>
</feature>
<feature type="turn" evidence="12">
    <location>
        <begin position="220"/>
        <end position="222"/>
    </location>
</feature>
<feature type="helix" evidence="12">
    <location>
        <begin position="223"/>
        <end position="226"/>
    </location>
</feature>
<feature type="turn" evidence="12">
    <location>
        <begin position="227"/>
        <end position="229"/>
    </location>
</feature>
<feature type="strand" evidence="12">
    <location>
        <begin position="232"/>
        <end position="239"/>
    </location>
</feature>
<feature type="strand" evidence="11">
    <location>
        <begin position="248"/>
        <end position="252"/>
    </location>
</feature>
<feature type="helix" evidence="12">
    <location>
        <begin position="256"/>
        <end position="265"/>
    </location>
</feature>
<feature type="strand" evidence="12">
    <location>
        <begin position="271"/>
        <end position="278"/>
    </location>
</feature>
<feature type="turn" evidence="12">
    <location>
        <begin position="283"/>
        <end position="285"/>
    </location>
</feature>
<feature type="helix" evidence="12">
    <location>
        <begin position="286"/>
        <end position="296"/>
    </location>
</feature>
<protein>
    <recommendedName>
        <fullName evidence="4">Iron(III) enterobactin esterase</fullName>
        <ecNumber evidence="2">3.1.1.108</ecNumber>
    </recommendedName>
</protein>
<name>PFEE_PSEAE</name>
<reference key="1">
    <citation type="journal article" date="2000" name="Nature">
        <title>Complete genome sequence of Pseudomonas aeruginosa PAO1, an opportunistic pathogen.</title>
        <authorList>
            <person name="Stover C.K."/>
            <person name="Pham X.-Q.T."/>
            <person name="Erwin A.L."/>
            <person name="Mizoguchi S.D."/>
            <person name="Warrener P."/>
            <person name="Hickey M.J."/>
            <person name="Brinkman F.S.L."/>
            <person name="Hufnagle W.O."/>
            <person name="Kowalik D.J."/>
            <person name="Lagrou M."/>
            <person name="Garber R.L."/>
            <person name="Goltry L."/>
            <person name="Tolentino E."/>
            <person name="Westbrock-Wadman S."/>
            <person name="Yuan Y."/>
            <person name="Brody L.L."/>
            <person name="Coulter S.N."/>
            <person name="Folger K.R."/>
            <person name="Kas A."/>
            <person name="Larbig K."/>
            <person name="Lim R.M."/>
            <person name="Smith K.A."/>
            <person name="Spencer D.H."/>
            <person name="Wong G.K.-S."/>
            <person name="Wu Z."/>
            <person name="Paulsen I.T."/>
            <person name="Reizer J."/>
            <person name="Saier M.H. Jr."/>
            <person name="Hancock R.E.W."/>
            <person name="Lory S."/>
            <person name="Olson M.V."/>
        </authorList>
    </citation>
    <scope>NUCLEOTIDE SEQUENCE [LARGE SCALE GENOMIC DNA]</scope>
    <source>
        <strain>ATCC 15692 / DSM 22644 / CIP 104116 / JCM 14847 / LMG 12228 / 1C / PRS 101 / PAO1</strain>
    </source>
</reference>
<reference evidence="7 8 9 10" key="2">
    <citation type="journal article" date="2018" name="ACS Chem. Biol.">
        <title>A key role for the periplasmic PfeE esterase in iron acquisition via the siderophore enterobactin in Pseudomonas aeruginosa.</title>
        <authorList>
            <person name="Perraud Q."/>
            <person name="Moynie L."/>
            <person name="Gasser V."/>
            <person name="Munier M."/>
            <person name="Godet J."/>
            <person name="Hoegy F."/>
            <person name="Mely Y."/>
            <person name="Mislin G.L.A."/>
            <person name="Naismith J.H."/>
            <person name="Schalk I.J."/>
        </authorList>
    </citation>
    <scope>X-RAY CRYSTALLOGRAPHY (1.49 ANGSTROMS) OF 27-304 OF WILD-TYPE; WILD-TYPE IN COMPLEX WITH INHIBITOR FERRI-CATECHOL AND MUTANT ALA-182 IN COMPLEXES WITH FE-ENT AND INHIBITOR FERRI-CATECHOL</scope>
    <scope>FUNCTION</scope>
    <scope>CATALYTIC ACTIVITY</scope>
    <scope>SUBUNIT</scope>
    <scope>SUBCELLULAR LOCATION</scope>
    <scope>INDUCTION</scope>
    <scope>DISRUPTION PHENOTYPE</scope>
    <scope>ACTIVE SITE</scope>
    <scope>MUTAGENESIS OF SER-182 AND HIS-283</scope>
    <source>
        <strain>ATCC 15692 / DSM 22644 / CIP 104116 / JCM 14847 / LMG 12228 / 1C / PRS 101 / PAO1</strain>
    </source>
</reference>
<organism>
    <name type="scientific">Pseudomonas aeruginosa (strain ATCC 15692 / DSM 22644 / CIP 104116 / JCM 14847 / LMG 12228 / 1C / PRS 101 / PAO1)</name>
    <dbReference type="NCBI Taxonomy" id="208964"/>
    <lineage>
        <taxon>Bacteria</taxon>
        <taxon>Pseudomonadati</taxon>
        <taxon>Pseudomonadota</taxon>
        <taxon>Gammaproteobacteria</taxon>
        <taxon>Pseudomonadales</taxon>
        <taxon>Pseudomonadaceae</taxon>
        <taxon>Pseudomonas</taxon>
    </lineage>
</organism>
<gene>
    <name evidence="3" type="primary">pfeE</name>
    <name evidence="6" type="ordered locus">PA2689</name>
</gene>
<accession>Q9I0F2</accession>
<keyword id="KW-0002">3D-structure</keyword>
<keyword id="KW-0378">Hydrolase</keyword>
<keyword id="KW-0574">Periplasm</keyword>
<keyword id="KW-1185">Reference proteome</keyword>
<keyword id="KW-0719">Serine esterase</keyword>
<keyword id="KW-0732">Signal</keyword>